<protein>
    <recommendedName>
        <fullName evidence="2">Small ribosomal subunit protein uS12</fullName>
    </recommendedName>
    <alternativeName>
        <fullName evidence="3">30S ribosomal protein S12</fullName>
    </alternativeName>
</protein>
<proteinExistence type="inferred from homology"/>
<organism>
    <name type="scientific">Sinorhizobium medicae (strain WSM419)</name>
    <name type="common">Ensifer medicae</name>
    <dbReference type="NCBI Taxonomy" id="366394"/>
    <lineage>
        <taxon>Bacteria</taxon>
        <taxon>Pseudomonadati</taxon>
        <taxon>Pseudomonadota</taxon>
        <taxon>Alphaproteobacteria</taxon>
        <taxon>Hyphomicrobiales</taxon>
        <taxon>Rhizobiaceae</taxon>
        <taxon>Sinorhizobium/Ensifer group</taxon>
        <taxon>Sinorhizobium</taxon>
    </lineage>
</organism>
<evidence type="ECO:0000250" key="1"/>
<evidence type="ECO:0000255" key="2">
    <source>
        <dbReference type="HAMAP-Rule" id="MF_00403"/>
    </source>
</evidence>
<evidence type="ECO:0000305" key="3"/>
<dbReference type="EMBL" id="CP000738">
    <property type="protein sequence ID" value="ABR59834.1"/>
    <property type="molecule type" value="Genomic_DNA"/>
</dbReference>
<dbReference type="RefSeq" id="WP_003507760.1">
    <property type="nucleotide sequence ID" value="NC_009636.1"/>
</dbReference>
<dbReference type="RefSeq" id="YP_001326669.1">
    <property type="nucleotide sequence ID" value="NC_009636.1"/>
</dbReference>
<dbReference type="SMR" id="A6U854"/>
<dbReference type="STRING" id="366394.Smed_0981"/>
<dbReference type="GeneID" id="92922484"/>
<dbReference type="KEGG" id="smd:Smed_0981"/>
<dbReference type="PATRIC" id="fig|366394.8.peg.4102"/>
<dbReference type="eggNOG" id="COG0048">
    <property type="taxonomic scope" value="Bacteria"/>
</dbReference>
<dbReference type="HOGENOM" id="CLU_104295_1_2_5"/>
<dbReference type="OrthoDB" id="9802366at2"/>
<dbReference type="PRO" id="PR:A6U854"/>
<dbReference type="Proteomes" id="UP000001108">
    <property type="component" value="Chromosome"/>
</dbReference>
<dbReference type="GO" id="GO:0015935">
    <property type="term" value="C:small ribosomal subunit"/>
    <property type="evidence" value="ECO:0007669"/>
    <property type="project" value="InterPro"/>
</dbReference>
<dbReference type="GO" id="GO:0019843">
    <property type="term" value="F:rRNA binding"/>
    <property type="evidence" value="ECO:0007669"/>
    <property type="project" value="UniProtKB-UniRule"/>
</dbReference>
<dbReference type="GO" id="GO:0003735">
    <property type="term" value="F:structural constituent of ribosome"/>
    <property type="evidence" value="ECO:0007669"/>
    <property type="project" value="InterPro"/>
</dbReference>
<dbReference type="GO" id="GO:0000049">
    <property type="term" value="F:tRNA binding"/>
    <property type="evidence" value="ECO:0007669"/>
    <property type="project" value="UniProtKB-UniRule"/>
</dbReference>
<dbReference type="GO" id="GO:0006412">
    <property type="term" value="P:translation"/>
    <property type="evidence" value="ECO:0007669"/>
    <property type="project" value="UniProtKB-UniRule"/>
</dbReference>
<dbReference type="CDD" id="cd03368">
    <property type="entry name" value="Ribosomal_S12"/>
    <property type="match status" value="1"/>
</dbReference>
<dbReference type="FunFam" id="2.40.50.140:FF:000001">
    <property type="entry name" value="30S ribosomal protein S12"/>
    <property type="match status" value="1"/>
</dbReference>
<dbReference type="Gene3D" id="2.40.50.140">
    <property type="entry name" value="Nucleic acid-binding proteins"/>
    <property type="match status" value="1"/>
</dbReference>
<dbReference type="HAMAP" id="MF_00403_B">
    <property type="entry name" value="Ribosomal_uS12_B"/>
    <property type="match status" value="1"/>
</dbReference>
<dbReference type="InterPro" id="IPR012340">
    <property type="entry name" value="NA-bd_OB-fold"/>
</dbReference>
<dbReference type="InterPro" id="IPR006032">
    <property type="entry name" value="Ribosomal_uS12"/>
</dbReference>
<dbReference type="InterPro" id="IPR005679">
    <property type="entry name" value="Ribosomal_uS12_bac"/>
</dbReference>
<dbReference type="NCBIfam" id="TIGR00981">
    <property type="entry name" value="rpsL_bact"/>
    <property type="match status" value="1"/>
</dbReference>
<dbReference type="PANTHER" id="PTHR11652">
    <property type="entry name" value="30S RIBOSOMAL PROTEIN S12 FAMILY MEMBER"/>
    <property type="match status" value="1"/>
</dbReference>
<dbReference type="Pfam" id="PF00164">
    <property type="entry name" value="Ribosom_S12_S23"/>
    <property type="match status" value="1"/>
</dbReference>
<dbReference type="PIRSF" id="PIRSF002133">
    <property type="entry name" value="Ribosomal_S12/S23"/>
    <property type="match status" value="1"/>
</dbReference>
<dbReference type="PRINTS" id="PR01034">
    <property type="entry name" value="RIBOSOMALS12"/>
</dbReference>
<dbReference type="SUPFAM" id="SSF50249">
    <property type="entry name" value="Nucleic acid-binding proteins"/>
    <property type="match status" value="1"/>
</dbReference>
<dbReference type="PROSITE" id="PS00055">
    <property type="entry name" value="RIBOSOMAL_S12"/>
    <property type="match status" value="1"/>
</dbReference>
<gene>
    <name evidence="2" type="primary">rpsL</name>
    <name type="ordered locus">Smed_0981</name>
</gene>
<sequence>MPTVNQLIRKPRQAQVKRNKVPALQENPQKRGVCTRVYTTTPKKPNSALRKVAKIRLTNGFEVIGYIPGEGHNLQEHSVVMIRGGRVKDLPGVRYHIIRGVLDTQGVKNRKQRRSKYGAKRPK</sequence>
<accession>A6U854</accession>
<feature type="chain" id="PRO_1000049812" description="Small ribosomal subunit protein uS12">
    <location>
        <begin position="1"/>
        <end position="123"/>
    </location>
</feature>
<feature type="modified residue" description="3-methylthioaspartic acid" evidence="1">
    <location>
        <position position="89"/>
    </location>
</feature>
<reference key="1">
    <citation type="submission" date="2007-06" db="EMBL/GenBank/DDBJ databases">
        <title>Complete sequence of Sinorhizobium medicae WSM419 chromosome.</title>
        <authorList>
            <consortium name="US DOE Joint Genome Institute"/>
            <person name="Copeland A."/>
            <person name="Lucas S."/>
            <person name="Lapidus A."/>
            <person name="Barry K."/>
            <person name="Glavina del Rio T."/>
            <person name="Dalin E."/>
            <person name="Tice H."/>
            <person name="Pitluck S."/>
            <person name="Chain P."/>
            <person name="Malfatti S."/>
            <person name="Shin M."/>
            <person name="Vergez L."/>
            <person name="Schmutz J."/>
            <person name="Larimer F."/>
            <person name="Land M."/>
            <person name="Hauser L."/>
            <person name="Kyrpides N."/>
            <person name="Mikhailova N."/>
            <person name="Reeve W.G."/>
            <person name="Richardson P."/>
        </authorList>
    </citation>
    <scope>NUCLEOTIDE SEQUENCE [LARGE SCALE GENOMIC DNA]</scope>
    <source>
        <strain>WSM419</strain>
    </source>
</reference>
<comment type="function">
    <text evidence="2">With S4 and S5 plays an important role in translational accuracy.</text>
</comment>
<comment type="function">
    <text evidence="2">Interacts with and stabilizes bases of the 16S rRNA that are involved in tRNA selection in the A site and with the mRNA backbone. Located at the interface of the 30S and 50S subunits, it traverses the body of the 30S subunit contacting proteins on the other side and probably holding the rRNA structure together. The combined cluster of proteins S8, S12 and S17 appears to hold together the shoulder and platform of the 30S subunit.</text>
</comment>
<comment type="subunit">
    <text evidence="2">Part of the 30S ribosomal subunit. Contacts proteins S8 and S17. May interact with IF1 in the 30S initiation complex.</text>
</comment>
<comment type="similarity">
    <text evidence="2">Belongs to the universal ribosomal protein uS12 family.</text>
</comment>
<name>RS12_SINMW</name>
<keyword id="KW-0488">Methylation</keyword>
<keyword id="KW-0687">Ribonucleoprotein</keyword>
<keyword id="KW-0689">Ribosomal protein</keyword>
<keyword id="KW-0694">RNA-binding</keyword>
<keyword id="KW-0699">rRNA-binding</keyword>
<keyword id="KW-0820">tRNA-binding</keyword>